<protein>
    <recommendedName>
        <fullName evidence="4">Integrator complex assembly factor WDR73</fullName>
    </recommendedName>
    <alternativeName>
        <fullName>WD repeat-containing protein 73</fullName>
    </alternativeName>
</protein>
<evidence type="ECO:0000250" key="1">
    <source>
        <dbReference type="UniProtKB" id="Q6P4I2"/>
    </source>
</evidence>
<evidence type="ECO:0000256" key="2">
    <source>
        <dbReference type="SAM" id="MobiDB-lite"/>
    </source>
</evidence>
<evidence type="ECO:0000269" key="3">
    <source>
    </source>
</evidence>
<evidence type="ECO:0000305" key="4"/>
<organism>
    <name type="scientific">Danio rerio</name>
    <name type="common">Zebrafish</name>
    <name type="synonym">Brachydanio rerio</name>
    <dbReference type="NCBI Taxonomy" id="7955"/>
    <lineage>
        <taxon>Eukaryota</taxon>
        <taxon>Metazoa</taxon>
        <taxon>Chordata</taxon>
        <taxon>Craniata</taxon>
        <taxon>Vertebrata</taxon>
        <taxon>Euteleostomi</taxon>
        <taxon>Actinopterygii</taxon>
        <taxon>Neopterygii</taxon>
        <taxon>Teleostei</taxon>
        <taxon>Ostariophysi</taxon>
        <taxon>Cypriniformes</taxon>
        <taxon>Danionidae</taxon>
        <taxon>Danioninae</taxon>
        <taxon>Danio</taxon>
    </lineage>
</organism>
<sequence length="376" mass="41235">MDISSDESDDWFMESLNAYRDLHLFQLEHPTKVIEWMGDKSICVAGYTGARSEILELLLPLKLYAGDNQGLCAERDFKVKHGGFSEEPVECLIHIPGTRCLVTSGNSNTLQIWDIGGDDSDVIKMTRVINLKSPSAKGSKITPGFTDSPTVLHGSCISDIQLTEIATGRVLHTVGKESSDSVSGLQFVNAFVFLICSTNGALLLGDTRDPSTCHYPLEESNSGLRWSFGLRSDSSQSEPSCCKVARLSSSGHMLLSDLRDLKSPFCQTQIKVPQSASKNHFMNISWAPVLDKCLSVSGFDGTVHIYNTNNWSTESSSPQPIFSHRGHEMSQEAKSSTSPAVVTAHSWHPSRPKTLLSAATDGSLHVWDWVDKITDR</sequence>
<accession>Q567G2</accession>
<dbReference type="EMBL" id="BC093184">
    <property type="protein sequence ID" value="AAH93184.1"/>
    <property type="molecule type" value="mRNA"/>
</dbReference>
<dbReference type="RefSeq" id="NP_001017646.1">
    <property type="nucleotide sequence ID" value="NM_001017646.1"/>
</dbReference>
<dbReference type="SMR" id="Q567G2"/>
<dbReference type="FunCoup" id="Q567G2">
    <property type="interactions" value="1083"/>
</dbReference>
<dbReference type="STRING" id="7955.ENSDARP00000032408"/>
<dbReference type="PaxDb" id="7955-ENSDARP00000032408"/>
<dbReference type="GeneID" id="550339"/>
<dbReference type="KEGG" id="dre:550339"/>
<dbReference type="AGR" id="ZFIN:ZDB-GENE-050417-126"/>
<dbReference type="CTD" id="84942"/>
<dbReference type="ZFIN" id="ZDB-GENE-050417-126">
    <property type="gene designation" value="wdr73"/>
</dbReference>
<dbReference type="eggNOG" id="KOG0264">
    <property type="taxonomic scope" value="Eukaryota"/>
</dbReference>
<dbReference type="InParanoid" id="Q567G2"/>
<dbReference type="OrthoDB" id="9822052at2759"/>
<dbReference type="PhylomeDB" id="Q567G2"/>
<dbReference type="PRO" id="PR:Q567G2"/>
<dbReference type="Proteomes" id="UP000000437">
    <property type="component" value="Alternate scaffold 21"/>
</dbReference>
<dbReference type="Proteomes" id="UP000000437">
    <property type="component" value="Chromosome 21"/>
</dbReference>
<dbReference type="GO" id="GO:0032154">
    <property type="term" value="C:cleavage furrow"/>
    <property type="evidence" value="ECO:0007669"/>
    <property type="project" value="UniProtKB-SubCell"/>
</dbReference>
<dbReference type="GO" id="GO:0005737">
    <property type="term" value="C:cytoplasm"/>
    <property type="evidence" value="ECO:0000250"/>
    <property type="project" value="UniProtKB"/>
</dbReference>
<dbReference type="GO" id="GO:0000922">
    <property type="term" value="C:spindle pole"/>
    <property type="evidence" value="ECO:0007669"/>
    <property type="project" value="UniProtKB-SubCell"/>
</dbReference>
<dbReference type="GO" id="GO:0030674">
    <property type="term" value="F:protein-macromolecule adaptor activity"/>
    <property type="evidence" value="ECO:0000250"/>
    <property type="project" value="UniProtKB"/>
</dbReference>
<dbReference type="GO" id="GO:0021702">
    <property type="term" value="P:cerebellar Purkinje cell differentiation"/>
    <property type="evidence" value="ECO:0000315"/>
    <property type="project" value="ZFIN"/>
</dbReference>
<dbReference type="GO" id="GO:0021549">
    <property type="term" value="P:cerebellum development"/>
    <property type="evidence" value="ECO:0000315"/>
    <property type="project" value="ZFIN"/>
</dbReference>
<dbReference type="GO" id="GO:0031122">
    <property type="term" value="P:cytoplasmic microtubule organization"/>
    <property type="evidence" value="ECO:0000318"/>
    <property type="project" value="GO_Central"/>
</dbReference>
<dbReference type="GO" id="GO:0030901">
    <property type="term" value="P:midbrain development"/>
    <property type="evidence" value="ECO:0000315"/>
    <property type="project" value="ZFIN"/>
</dbReference>
<dbReference type="Gene3D" id="2.130.10.10">
    <property type="entry name" value="YVTN repeat-like/Quinoprotein amine dehydrogenase"/>
    <property type="match status" value="1"/>
</dbReference>
<dbReference type="InterPro" id="IPR015943">
    <property type="entry name" value="WD40/YVTN_repeat-like_dom_sf"/>
</dbReference>
<dbReference type="InterPro" id="IPR036322">
    <property type="entry name" value="WD40_repeat_dom_sf"/>
</dbReference>
<dbReference type="InterPro" id="IPR001680">
    <property type="entry name" value="WD40_rpt"/>
</dbReference>
<dbReference type="InterPro" id="IPR042795">
    <property type="entry name" value="Wdr73"/>
</dbReference>
<dbReference type="PANTHER" id="PTHR46947">
    <property type="entry name" value="WD REPEAT-CONTAINING PROTEIN 73"/>
    <property type="match status" value="1"/>
</dbReference>
<dbReference type="PANTHER" id="PTHR46947:SF1">
    <property type="entry name" value="WD REPEAT-CONTAINING PROTEIN 73"/>
    <property type="match status" value="1"/>
</dbReference>
<dbReference type="Pfam" id="PF00400">
    <property type="entry name" value="WD40"/>
    <property type="match status" value="1"/>
</dbReference>
<dbReference type="SMART" id="SM00320">
    <property type="entry name" value="WD40"/>
    <property type="match status" value="4"/>
</dbReference>
<dbReference type="SUPFAM" id="SSF50978">
    <property type="entry name" value="WD40 repeat-like"/>
    <property type="match status" value="1"/>
</dbReference>
<dbReference type="PROSITE" id="PS50082">
    <property type="entry name" value="WD_REPEATS_2"/>
    <property type="match status" value="1"/>
</dbReference>
<keyword id="KW-0963">Cytoplasm</keyword>
<keyword id="KW-0206">Cytoskeleton</keyword>
<keyword id="KW-1185">Reference proteome</keyword>
<keyword id="KW-0677">Repeat</keyword>
<keyword id="KW-0853">WD repeat</keyword>
<comment type="function">
    <text evidence="1">Component of a multiprotein complex required for the assembly of the RNA endonuclease module of the integrator complex. Associates with ints9 and ints11 in the cytoplasm, stabilizing the ints9-ints11 heterodimer and blocking the active site of ints11. Brat1 then joins the complex and plugs the active site of ints11, leading to wdr73 release and nuclear import of ints9 and ints11.</text>
</comment>
<comment type="subcellular location">
    <subcellularLocation>
        <location evidence="1">Cytoplasm</location>
    </subcellularLocation>
    <subcellularLocation>
        <location evidence="1">Cytoplasm</location>
        <location evidence="1">Cytoskeleton</location>
        <location evidence="1">Spindle</location>
    </subcellularLocation>
    <subcellularLocation>
        <location evidence="1">Cytoplasm</location>
        <location evidence="1">Cytoskeleton</location>
        <location evidence="1">Spindle pole</location>
    </subcellularLocation>
    <subcellularLocation>
        <location evidence="1">Cleavage furrow</location>
    </subcellularLocation>
    <text evidence="1">During interphase, located in the cytosol. During mitosis, accumulates at the spindle poles and microtubule asters and later in the cleavage furrow.</text>
</comment>
<comment type="disruption phenotype">
    <text evidence="3">Brain growth and morphogenesis defects.</text>
</comment>
<comment type="similarity">
    <text evidence="4">Belongs to the WD repeat WDR73 family.</text>
</comment>
<name>WDR73_DANRE</name>
<feature type="chain" id="PRO_0000307282" description="Integrator complex assembly factor WDR73">
    <location>
        <begin position="1"/>
        <end position="376"/>
    </location>
</feature>
<feature type="repeat" description="WD 1">
    <location>
        <begin position="84"/>
        <end position="123"/>
    </location>
</feature>
<feature type="repeat" description="WD 2">
    <location>
        <begin position="276"/>
        <end position="316"/>
    </location>
</feature>
<feature type="repeat" description="WD 3">
    <location>
        <begin position="337"/>
        <end position="376"/>
    </location>
</feature>
<feature type="region of interest" description="Disordered" evidence="2">
    <location>
        <begin position="316"/>
        <end position="336"/>
    </location>
</feature>
<proteinExistence type="evidence at transcript level"/>
<gene>
    <name type="primary">wdr73</name>
    <name type="ORF">zgc:112071</name>
</gene>
<reference key="1">
    <citation type="submission" date="2005-04" db="EMBL/GenBank/DDBJ databases">
        <authorList>
            <consortium name="NIH - Zebrafish Gene Collection (ZGC) project"/>
        </authorList>
    </citation>
    <scope>NUCLEOTIDE SEQUENCE [LARGE SCALE MRNA]</scope>
    <source>
        <tissue>Ovary</tissue>
    </source>
</reference>
<reference key="2">
    <citation type="journal article" date="2015" name="J. Med. Genet.">
        <title>Nonsense mutation in the WDR73 gene is associated with Galloway-Mowat syndrome.</title>
        <authorList>
            <person name="Ben-Omran T."/>
            <person name="Fahiminiya S."/>
            <person name="Sorfazlian N."/>
            <person name="Almuriekhi M."/>
            <person name="Nawaz Z."/>
            <person name="Nadaf J."/>
            <person name="Khadija K.A."/>
            <person name="Zaineddin S."/>
            <person name="Kamel H."/>
            <person name="Majewski J."/>
            <person name="Tropepe V."/>
        </authorList>
    </citation>
    <scope>DISRUPTION PHENOTYPE</scope>
</reference>